<name>GRPE_LEPBA</name>
<protein>
    <recommendedName>
        <fullName evidence="1">Protein GrpE</fullName>
    </recommendedName>
    <alternativeName>
        <fullName evidence="1">HSP-70 cofactor</fullName>
    </alternativeName>
</protein>
<gene>
    <name evidence="1" type="primary">grpE</name>
    <name type="ordered locus">LBF_3266</name>
</gene>
<dbReference type="EMBL" id="CP000777">
    <property type="protein sequence ID" value="ABZ95733.1"/>
    <property type="molecule type" value="Genomic_DNA"/>
</dbReference>
<dbReference type="RefSeq" id="WP_012390300.1">
    <property type="nucleotide sequence ID" value="NC_010842.1"/>
</dbReference>
<dbReference type="SMR" id="B0SHT2"/>
<dbReference type="KEGG" id="lbf:LBF_3266"/>
<dbReference type="HOGENOM" id="CLU_057217_5_2_12"/>
<dbReference type="GO" id="GO:0005737">
    <property type="term" value="C:cytoplasm"/>
    <property type="evidence" value="ECO:0007669"/>
    <property type="project" value="UniProtKB-SubCell"/>
</dbReference>
<dbReference type="GO" id="GO:0000774">
    <property type="term" value="F:adenyl-nucleotide exchange factor activity"/>
    <property type="evidence" value="ECO:0007669"/>
    <property type="project" value="InterPro"/>
</dbReference>
<dbReference type="GO" id="GO:0042803">
    <property type="term" value="F:protein homodimerization activity"/>
    <property type="evidence" value="ECO:0007669"/>
    <property type="project" value="InterPro"/>
</dbReference>
<dbReference type="GO" id="GO:0051087">
    <property type="term" value="F:protein-folding chaperone binding"/>
    <property type="evidence" value="ECO:0007669"/>
    <property type="project" value="InterPro"/>
</dbReference>
<dbReference type="GO" id="GO:0051082">
    <property type="term" value="F:unfolded protein binding"/>
    <property type="evidence" value="ECO:0007669"/>
    <property type="project" value="TreeGrafter"/>
</dbReference>
<dbReference type="GO" id="GO:0006457">
    <property type="term" value="P:protein folding"/>
    <property type="evidence" value="ECO:0007669"/>
    <property type="project" value="InterPro"/>
</dbReference>
<dbReference type="CDD" id="cd00446">
    <property type="entry name" value="GrpE"/>
    <property type="match status" value="1"/>
</dbReference>
<dbReference type="Gene3D" id="3.90.20.20">
    <property type="match status" value="1"/>
</dbReference>
<dbReference type="Gene3D" id="2.30.22.10">
    <property type="entry name" value="Head domain of nucleotide exchange factor GrpE"/>
    <property type="match status" value="1"/>
</dbReference>
<dbReference type="HAMAP" id="MF_01151">
    <property type="entry name" value="GrpE"/>
    <property type="match status" value="1"/>
</dbReference>
<dbReference type="InterPro" id="IPR000740">
    <property type="entry name" value="GrpE"/>
</dbReference>
<dbReference type="InterPro" id="IPR013805">
    <property type="entry name" value="GrpE_coiled_coil"/>
</dbReference>
<dbReference type="InterPro" id="IPR009012">
    <property type="entry name" value="GrpE_head"/>
</dbReference>
<dbReference type="NCBIfam" id="NF010744">
    <property type="entry name" value="PRK14146.1"/>
    <property type="match status" value="1"/>
</dbReference>
<dbReference type="PANTHER" id="PTHR21237">
    <property type="entry name" value="GRPE PROTEIN"/>
    <property type="match status" value="1"/>
</dbReference>
<dbReference type="PANTHER" id="PTHR21237:SF23">
    <property type="entry name" value="GRPE PROTEIN HOMOLOG, MITOCHONDRIAL"/>
    <property type="match status" value="1"/>
</dbReference>
<dbReference type="Pfam" id="PF01025">
    <property type="entry name" value="GrpE"/>
    <property type="match status" value="1"/>
</dbReference>
<dbReference type="PRINTS" id="PR00773">
    <property type="entry name" value="GRPEPROTEIN"/>
</dbReference>
<dbReference type="SUPFAM" id="SSF58014">
    <property type="entry name" value="Coiled-coil domain of nucleotide exchange factor GrpE"/>
    <property type="match status" value="1"/>
</dbReference>
<dbReference type="SUPFAM" id="SSF51064">
    <property type="entry name" value="Head domain of nucleotide exchange factor GrpE"/>
    <property type="match status" value="1"/>
</dbReference>
<reference key="1">
    <citation type="journal article" date="2008" name="PLoS ONE">
        <title>Genome sequence of the saprophyte Leptospira biflexa provides insights into the evolution of Leptospira and the pathogenesis of leptospirosis.</title>
        <authorList>
            <person name="Picardeau M."/>
            <person name="Bulach D.M."/>
            <person name="Bouchier C."/>
            <person name="Zuerner R.L."/>
            <person name="Zidane N."/>
            <person name="Wilson P.J."/>
            <person name="Creno S."/>
            <person name="Kuczek E.S."/>
            <person name="Bommezzadri S."/>
            <person name="Davis J.C."/>
            <person name="McGrath A."/>
            <person name="Johnson M.J."/>
            <person name="Boursaux-Eude C."/>
            <person name="Seemann T."/>
            <person name="Rouy Z."/>
            <person name="Coppel R.L."/>
            <person name="Rood J.I."/>
            <person name="Lajus A."/>
            <person name="Davies J.K."/>
            <person name="Medigue C."/>
            <person name="Adler B."/>
        </authorList>
    </citation>
    <scope>NUCLEOTIDE SEQUENCE [LARGE SCALE GENOMIC DNA]</scope>
    <source>
        <strain>Patoc 1 / Ames</strain>
    </source>
</reference>
<keyword id="KW-0143">Chaperone</keyword>
<keyword id="KW-0963">Cytoplasm</keyword>
<keyword id="KW-0346">Stress response</keyword>
<sequence length="190" mass="21531">MAEETNQSLEDQNVQVEEGQTISDEAIEQAVEGAEKELDNAKKEIESLKDSWLRERAEFQNYKRRTANDLLNARKESIKKFAEGLTGALDNLERVSNVPNQTPEVVAFVEGIKMVQKEFYSVLEKEGIKRLDPKGQPFDPMLMEAIASEESAEFTEETVVETYQAGYYHEEGESKQSIRPARVKVGKPQS</sequence>
<feature type="chain" id="PRO_1000137581" description="Protein GrpE">
    <location>
        <begin position="1"/>
        <end position="190"/>
    </location>
</feature>
<feature type="region of interest" description="Disordered" evidence="2">
    <location>
        <begin position="1"/>
        <end position="22"/>
    </location>
</feature>
<feature type="region of interest" description="Disordered" evidence="2">
    <location>
        <begin position="170"/>
        <end position="190"/>
    </location>
</feature>
<feature type="compositionally biased region" description="Basic residues" evidence="2">
    <location>
        <begin position="181"/>
        <end position="190"/>
    </location>
</feature>
<comment type="function">
    <text evidence="1">Participates actively in the response to hyperosmotic and heat shock by preventing the aggregation of stress-denatured proteins, in association with DnaK and GrpE. It is the nucleotide exchange factor for DnaK and may function as a thermosensor. Unfolded proteins bind initially to DnaJ; upon interaction with the DnaJ-bound protein, DnaK hydrolyzes its bound ATP, resulting in the formation of a stable complex. GrpE releases ADP from DnaK; ATP binding to DnaK triggers the release of the substrate protein, thus completing the reaction cycle. Several rounds of ATP-dependent interactions between DnaJ, DnaK and GrpE are required for fully efficient folding.</text>
</comment>
<comment type="subunit">
    <text evidence="1">Homodimer.</text>
</comment>
<comment type="subcellular location">
    <subcellularLocation>
        <location evidence="1">Cytoplasm</location>
    </subcellularLocation>
</comment>
<comment type="similarity">
    <text evidence="1">Belongs to the GrpE family.</text>
</comment>
<organism>
    <name type="scientific">Leptospira biflexa serovar Patoc (strain Patoc 1 / Ames)</name>
    <dbReference type="NCBI Taxonomy" id="355278"/>
    <lineage>
        <taxon>Bacteria</taxon>
        <taxon>Pseudomonadati</taxon>
        <taxon>Spirochaetota</taxon>
        <taxon>Spirochaetia</taxon>
        <taxon>Leptospirales</taxon>
        <taxon>Leptospiraceae</taxon>
        <taxon>Leptospira</taxon>
    </lineage>
</organism>
<accession>B0SHT2</accession>
<evidence type="ECO:0000255" key="1">
    <source>
        <dbReference type="HAMAP-Rule" id="MF_01151"/>
    </source>
</evidence>
<evidence type="ECO:0000256" key="2">
    <source>
        <dbReference type="SAM" id="MobiDB-lite"/>
    </source>
</evidence>
<proteinExistence type="inferred from homology"/>